<sequence length="204" mass="23243">MDSDSGEQSEGEPGTAAGPHVFSSKNLALQAQKKILSKIASKTVANMLIDDTSSEIFDELYKVTEIHTHNKKEAHKIMKDAIKVAIKIGILYRNKQFSQEEVIIVEKLRKKLNQTAMTMVSFYEVEYTFDTNVLSKLLHECKDLVHELVQRHLTPRTHGRINHVFNHFADVEFLSTLYGPHGNCRPNLKRICEGINKLLDDKIL</sequence>
<dbReference type="EMBL" id="AK170374">
    <property type="protein sequence ID" value="BAE41754.1"/>
    <property type="molecule type" value="mRNA"/>
</dbReference>
<dbReference type="EMBL" id="AK171174">
    <property type="protein sequence ID" value="BAE42293.1"/>
    <property type="molecule type" value="mRNA"/>
</dbReference>
<dbReference type="EMBL" id="BC118003">
    <property type="protein sequence ID" value="AAI18004.1"/>
    <property type="molecule type" value="mRNA"/>
</dbReference>
<dbReference type="EMBL" id="BC119769">
    <property type="protein sequence ID" value="AAI19770.1"/>
    <property type="molecule type" value="mRNA"/>
</dbReference>
<dbReference type="CCDS" id="CCDS40641.1"/>
<dbReference type="RefSeq" id="NP_001028707.1">
    <property type="nucleotide sequence ID" value="NM_001033535.3"/>
</dbReference>
<dbReference type="SMR" id="Q3TBL6"/>
<dbReference type="FunCoup" id="Q3TBL6">
    <property type="interactions" value="1425"/>
</dbReference>
<dbReference type="STRING" id="10090.ENSMUSP00000096356"/>
<dbReference type="iPTMnet" id="Q3TBL6"/>
<dbReference type="PhosphoSitePlus" id="Q3TBL6"/>
<dbReference type="PaxDb" id="10090-ENSMUSP00000096356"/>
<dbReference type="ProteomicsDB" id="297500"/>
<dbReference type="Antibodypedia" id="57338">
    <property type="antibodies" value="86 antibodies from 21 providers"/>
</dbReference>
<dbReference type="Ensembl" id="ENSMUST00000098760.5">
    <property type="protein sequence ID" value="ENSMUSP00000096356.4"/>
    <property type="gene ID" value="ENSMUSG00000074345.5"/>
</dbReference>
<dbReference type="GeneID" id="244882"/>
<dbReference type="KEGG" id="mmu:244882"/>
<dbReference type="UCSC" id="uc009pmt.2">
    <property type="organism name" value="mouse"/>
</dbReference>
<dbReference type="AGR" id="MGI:2685363"/>
<dbReference type="CTD" id="388121"/>
<dbReference type="MGI" id="MGI:2685363">
    <property type="gene designation" value="Tnfaip8l3"/>
</dbReference>
<dbReference type="VEuPathDB" id="HostDB:ENSMUSG00000074345"/>
<dbReference type="eggNOG" id="ENOG502QRE6">
    <property type="taxonomic scope" value="Eukaryota"/>
</dbReference>
<dbReference type="GeneTree" id="ENSGT00390000003488"/>
<dbReference type="HOGENOM" id="CLU_085918_1_0_1"/>
<dbReference type="InParanoid" id="Q3TBL6"/>
<dbReference type="OMA" id="RMCEGIN"/>
<dbReference type="OrthoDB" id="10055976at2759"/>
<dbReference type="PhylomeDB" id="Q3TBL6"/>
<dbReference type="TreeFam" id="TF323415"/>
<dbReference type="Reactome" id="R-MMU-1483255">
    <property type="pathway name" value="PI Metabolism"/>
</dbReference>
<dbReference type="BioGRID-ORCS" id="244882">
    <property type="hits" value="1 hit in 79 CRISPR screens"/>
</dbReference>
<dbReference type="PRO" id="PR:Q3TBL6"/>
<dbReference type="Proteomes" id="UP000000589">
    <property type="component" value="Chromosome 9"/>
</dbReference>
<dbReference type="RNAct" id="Q3TBL6">
    <property type="molecule type" value="protein"/>
</dbReference>
<dbReference type="Bgee" id="ENSMUSG00000074345">
    <property type="expression patterns" value="Expressed in dentate gyrus of hippocampal formation granule cell and 32 other cell types or tissues"/>
</dbReference>
<dbReference type="GO" id="GO:0005737">
    <property type="term" value="C:cytoplasm"/>
    <property type="evidence" value="ECO:0000314"/>
    <property type="project" value="UniProtKB"/>
</dbReference>
<dbReference type="GO" id="GO:0005829">
    <property type="term" value="C:cytosol"/>
    <property type="evidence" value="ECO:0007669"/>
    <property type="project" value="Ensembl"/>
</dbReference>
<dbReference type="GO" id="GO:0005654">
    <property type="term" value="C:nucleoplasm"/>
    <property type="evidence" value="ECO:0007669"/>
    <property type="project" value="Ensembl"/>
</dbReference>
<dbReference type="GO" id="GO:0005886">
    <property type="term" value="C:plasma membrane"/>
    <property type="evidence" value="ECO:0000314"/>
    <property type="project" value="UniProtKB"/>
</dbReference>
<dbReference type="GO" id="GO:0035091">
    <property type="term" value="F:phosphatidylinositol binding"/>
    <property type="evidence" value="ECO:0000314"/>
    <property type="project" value="UniProtKB"/>
</dbReference>
<dbReference type="GO" id="GO:0008526">
    <property type="term" value="F:phosphatidylinositol transfer activity"/>
    <property type="evidence" value="ECO:0000315"/>
    <property type="project" value="UniProtKB"/>
</dbReference>
<dbReference type="GO" id="GO:1902633">
    <property type="term" value="P:1-phosphatidyl-1D-myo-inositol 4,5-bisphosphate metabolic process"/>
    <property type="evidence" value="ECO:0000314"/>
    <property type="project" value="GO_Central"/>
</dbReference>
<dbReference type="GO" id="GO:0015914">
    <property type="term" value="P:phospholipid transport"/>
    <property type="evidence" value="ECO:0000314"/>
    <property type="project" value="UniProtKB"/>
</dbReference>
<dbReference type="GO" id="GO:0070374">
    <property type="term" value="P:positive regulation of ERK1 and ERK2 cascade"/>
    <property type="evidence" value="ECO:0000314"/>
    <property type="project" value="UniProtKB"/>
</dbReference>
<dbReference type="GO" id="GO:0042981">
    <property type="term" value="P:regulation of apoptotic process"/>
    <property type="evidence" value="ECO:0007669"/>
    <property type="project" value="InterPro"/>
</dbReference>
<dbReference type="FunFam" id="1.20.1440.160:FF:000001">
    <property type="entry name" value="Tumor necrosis factor alpha-induced protein 8-like 1"/>
    <property type="match status" value="1"/>
</dbReference>
<dbReference type="Gene3D" id="1.20.1440.160">
    <property type="entry name" value="Tumor necrosis factor alpha-induced protein 8-like"/>
    <property type="match status" value="1"/>
</dbReference>
<dbReference type="InterPro" id="IPR008477">
    <property type="entry name" value="TNFAIP8-like"/>
</dbReference>
<dbReference type="InterPro" id="IPR038355">
    <property type="entry name" value="TNFAIP8_sf"/>
</dbReference>
<dbReference type="PANTHER" id="PTHR12757:SF5">
    <property type="entry name" value="TUMOR NECROSIS FACTOR ALPHA-INDUCED PROTEIN 8-LIKE PROTEIN 3"/>
    <property type="match status" value="1"/>
</dbReference>
<dbReference type="PANTHER" id="PTHR12757">
    <property type="entry name" value="TUMOR NECROSIS FACTOR INDUCED PROTEIN"/>
    <property type="match status" value="1"/>
</dbReference>
<dbReference type="Pfam" id="PF05527">
    <property type="entry name" value="DUF758"/>
    <property type="match status" value="1"/>
</dbReference>
<name>TP8L3_MOUSE</name>
<evidence type="ECO:0000256" key="1">
    <source>
        <dbReference type="SAM" id="MobiDB-lite"/>
    </source>
</evidence>
<evidence type="ECO:0000269" key="2">
    <source>
    </source>
</evidence>
<evidence type="ECO:0000269" key="3">
    <source>
    </source>
</evidence>
<evidence type="ECO:0000305" key="4"/>
<gene>
    <name type="primary">Tnfaip8l3</name>
</gene>
<accession>Q3TBL6</accession>
<feature type="chain" id="PRO_0000331425" description="Tumor necrosis factor alpha-induced protein 8-like protein 3">
    <location>
        <begin position="1"/>
        <end position="204"/>
    </location>
</feature>
<feature type="region of interest" description="Disordered" evidence="1">
    <location>
        <begin position="1"/>
        <end position="20"/>
    </location>
</feature>
<feature type="region of interest" description="Binding to phosphoinositides">
    <location>
        <begin position="21"/>
        <end position="204"/>
    </location>
</feature>
<feature type="compositionally biased region" description="Acidic residues" evidence="1">
    <location>
        <begin position="1"/>
        <end position="10"/>
    </location>
</feature>
<feature type="mutagenesis site" description="Reduces binding to phosphoinositide; when associated with Gln-34; Gln-38 and Gln-42." evidence="2">
    <original>K</original>
    <variation>Q</variation>
    <location>
        <position position="33"/>
    </location>
</feature>
<feature type="mutagenesis site" description="Reduces binding to phosphoinositide; when associated with Gln-33; Gln-38 and Gln-42." evidence="2">
    <original>K</original>
    <variation>Q</variation>
    <location>
        <position position="34"/>
    </location>
</feature>
<feature type="mutagenesis site" description="Reduces binding to phosphoinositide; when associated with Gln-33; Gln-34 and Gln-42." evidence="2">
    <original>K</original>
    <variation>Q</variation>
    <location>
        <position position="38"/>
    </location>
</feature>
<feature type="mutagenesis site" description="Reduces binding to phosphoinositide; when associated with Gln-33; Gln-34 and Gln-38." evidence="2">
    <original>K</original>
    <variation>Q</variation>
    <location>
        <position position="42"/>
    </location>
</feature>
<feature type="mutagenesis site" description="Reduces binding to phosphoinositide." evidence="2">
    <original>L</original>
    <variation>W</variation>
    <location>
        <position position="60"/>
    </location>
</feature>
<feature type="mutagenesis site" description="Reduces binding to phosphoinositide; when associated with Gln-109." evidence="2">
    <original>R</original>
    <variation>Q</variation>
    <location>
        <position position="93"/>
    </location>
</feature>
<feature type="mutagenesis site" description="Reduces binding to phosphoinositide; when associated with Gln-93." evidence="2">
    <original>R</original>
    <variation>Q</variation>
    <location>
        <position position="109"/>
    </location>
</feature>
<protein>
    <recommendedName>
        <fullName>Tumor necrosis factor alpha-induced protein 8-like protein 3</fullName>
        <shortName>TNF alpha-induced protein 8-like protein 3</shortName>
        <shortName>TNFAIP8-like protein 3</shortName>
    </recommendedName>
</protein>
<proteinExistence type="evidence at protein level"/>
<organism>
    <name type="scientific">Mus musculus</name>
    <name type="common">Mouse</name>
    <dbReference type="NCBI Taxonomy" id="10090"/>
    <lineage>
        <taxon>Eukaryota</taxon>
        <taxon>Metazoa</taxon>
        <taxon>Chordata</taxon>
        <taxon>Craniata</taxon>
        <taxon>Vertebrata</taxon>
        <taxon>Euteleostomi</taxon>
        <taxon>Mammalia</taxon>
        <taxon>Eutheria</taxon>
        <taxon>Euarchontoglires</taxon>
        <taxon>Glires</taxon>
        <taxon>Rodentia</taxon>
        <taxon>Myomorpha</taxon>
        <taxon>Muroidea</taxon>
        <taxon>Muridae</taxon>
        <taxon>Murinae</taxon>
        <taxon>Mus</taxon>
        <taxon>Mus</taxon>
    </lineage>
</organism>
<keyword id="KW-1003">Cell membrane</keyword>
<keyword id="KW-0963">Cytoplasm</keyword>
<keyword id="KW-0445">Lipid transport</keyword>
<keyword id="KW-0472">Membrane</keyword>
<keyword id="KW-1185">Reference proteome</keyword>
<keyword id="KW-0813">Transport</keyword>
<comment type="function">
    <text evidence="2">Acts as a lipid transfer protein. Preferentially captures and shuttles two lipid second messengers, i.e., phosphatidylinositol 4,5- bisphosphate and phosphatidylinositol 3,4,5-trisphosphate and increases their levels in the plasma membrane. Additionally, may also function as a lipid-presenting protein to enhance the activity of the PI3K-AKT and MEK-ERK pathways. May act as a regulator of tumorigenesis through its activation of phospholipid signaling.</text>
</comment>
<comment type="subcellular location">
    <subcellularLocation>
        <location evidence="3">Cytoplasm</location>
    </subcellularLocation>
    <subcellularLocation>
        <location evidence="2">Cell membrane</location>
    </subcellularLocation>
    <text evidence="2">On PDGF activation, translocates from cytoplasm to plasma membrane.</text>
</comment>
<comment type="tissue specificity">
    <text evidence="2 3">Widely expressed (at protein level).</text>
</comment>
<comment type="domain">
    <text evidence="2">The N-terminal domain (AA 2-20) is essential for its effect on cell growth and survival.</text>
</comment>
<comment type="disruption phenotype">
    <text evidence="3">Deficient mice develop normally during the first 3 months of life under pathogen-free conditions. However, following subcutaneous injection of the carcinogen 3-methylcholanthrene, deficient mice exhibit markedly delayed skin tumor onset and reduced tumor size compared with wild-type mice.</text>
</comment>
<comment type="similarity">
    <text evidence="4">Belongs to the TNFAIP8 family.</text>
</comment>
<reference key="1">
    <citation type="journal article" date="2005" name="Science">
        <title>The transcriptional landscape of the mammalian genome.</title>
        <authorList>
            <person name="Carninci P."/>
            <person name="Kasukawa T."/>
            <person name="Katayama S."/>
            <person name="Gough J."/>
            <person name="Frith M.C."/>
            <person name="Maeda N."/>
            <person name="Oyama R."/>
            <person name="Ravasi T."/>
            <person name="Lenhard B."/>
            <person name="Wells C."/>
            <person name="Kodzius R."/>
            <person name="Shimokawa K."/>
            <person name="Bajic V.B."/>
            <person name="Brenner S.E."/>
            <person name="Batalov S."/>
            <person name="Forrest A.R."/>
            <person name="Zavolan M."/>
            <person name="Davis M.J."/>
            <person name="Wilming L.G."/>
            <person name="Aidinis V."/>
            <person name="Allen J.E."/>
            <person name="Ambesi-Impiombato A."/>
            <person name="Apweiler R."/>
            <person name="Aturaliya R.N."/>
            <person name="Bailey T.L."/>
            <person name="Bansal M."/>
            <person name="Baxter L."/>
            <person name="Beisel K.W."/>
            <person name="Bersano T."/>
            <person name="Bono H."/>
            <person name="Chalk A.M."/>
            <person name="Chiu K.P."/>
            <person name="Choudhary V."/>
            <person name="Christoffels A."/>
            <person name="Clutterbuck D.R."/>
            <person name="Crowe M.L."/>
            <person name="Dalla E."/>
            <person name="Dalrymple B.P."/>
            <person name="de Bono B."/>
            <person name="Della Gatta G."/>
            <person name="di Bernardo D."/>
            <person name="Down T."/>
            <person name="Engstrom P."/>
            <person name="Fagiolini M."/>
            <person name="Faulkner G."/>
            <person name="Fletcher C.F."/>
            <person name="Fukushima T."/>
            <person name="Furuno M."/>
            <person name="Futaki S."/>
            <person name="Gariboldi M."/>
            <person name="Georgii-Hemming P."/>
            <person name="Gingeras T.R."/>
            <person name="Gojobori T."/>
            <person name="Green R.E."/>
            <person name="Gustincich S."/>
            <person name="Harbers M."/>
            <person name="Hayashi Y."/>
            <person name="Hensch T.K."/>
            <person name="Hirokawa N."/>
            <person name="Hill D."/>
            <person name="Huminiecki L."/>
            <person name="Iacono M."/>
            <person name="Ikeo K."/>
            <person name="Iwama A."/>
            <person name="Ishikawa T."/>
            <person name="Jakt M."/>
            <person name="Kanapin A."/>
            <person name="Katoh M."/>
            <person name="Kawasawa Y."/>
            <person name="Kelso J."/>
            <person name="Kitamura H."/>
            <person name="Kitano H."/>
            <person name="Kollias G."/>
            <person name="Krishnan S.P."/>
            <person name="Kruger A."/>
            <person name="Kummerfeld S.K."/>
            <person name="Kurochkin I.V."/>
            <person name="Lareau L.F."/>
            <person name="Lazarevic D."/>
            <person name="Lipovich L."/>
            <person name="Liu J."/>
            <person name="Liuni S."/>
            <person name="McWilliam S."/>
            <person name="Madan Babu M."/>
            <person name="Madera M."/>
            <person name="Marchionni L."/>
            <person name="Matsuda H."/>
            <person name="Matsuzawa S."/>
            <person name="Miki H."/>
            <person name="Mignone F."/>
            <person name="Miyake S."/>
            <person name="Morris K."/>
            <person name="Mottagui-Tabar S."/>
            <person name="Mulder N."/>
            <person name="Nakano N."/>
            <person name="Nakauchi H."/>
            <person name="Ng P."/>
            <person name="Nilsson R."/>
            <person name="Nishiguchi S."/>
            <person name="Nishikawa S."/>
            <person name="Nori F."/>
            <person name="Ohara O."/>
            <person name="Okazaki Y."/>
            <person name="Orlando V."/>
            <person name="Pang K.C."/>
            <person name="Pavan W.J."/>
            <person name="Pavesi G."/>
            <person name="Pesole G."/>
            <person name="Petrovsky N."/>
            <person name="Piazza S."/>
            <person name="Reed J."/>
            <person name="Reid J.F."/>
            <person name="Ring B.Z."/>
            <person name="Ringwald M."/>
            <person name="Rost B."/>
            <person name="Ruan Y."/>
            <person name="Salzberg S.L."/>
            <person name="Sandelin A."/>
            <person name="Schneider C."/>
            <person name="Schoenbach C."/>
            <person name="Sekiguchi K."/>
            <person name="Semple C.A."/>
            <person name="Seno S."/>
            <person name="Sessa L."/>
            <person name="Sheng Y."/>
            <person name="Shibata Y."/>
            <person name="Shimada H."/>
            <person name="Shimada K."/>
            <person name="Silva D."/>
            <person name="Sinclair B."/>
            <person name="Sperling S."/>
            <person name="Stupka E."/>
            <person name="Sugiura K."/>
            <person name="Sultana R."/>
            <person name="Takenaka Y."/>
            <person name="Taki K."/>
            <person name="Tammoja K."/>
            <person name="Tan S.L."/>
            <person name="Tang S."/>
            <person name="Taylor M.S."/>
            <person name="Tegner J."/>
            <person name="Teichmann S.A."/>
            <person name="Ueda H.R."/>
            <person name="van Nimwegen E."/>
            <person name="Verardo R."/>
            <person name="Wei C.L."/>
            <person name="Yagi K."/>
            <person name="Yamanishi H."/>
            <person name="Zabarovsky E."/>
            <person name="Zhu S."/>
            <person name="Zimmer A."/>
            <person name="Hide W."/>
            <person name="Bult C."/>
            <person name="Grimmond S.M."/>
            <person name="Teasdale R.D."/>
            <person name="Liu E.T."/>
            <person name="Brusic V."/>
            <person name="Quackenbush J."/>
            <person name="Wahlestedt C."/>
            <person name="Mattick J.S."/>
            <person name="Hume D.A."/>
            <person name="Kai C."/>
            <person name="Sasaki D."/>
            <person name="Tomaru Y."/>
            <person name="Fukuda S."/>
            <person name="Kanamori-Katayama M."/>
            <person name="Suzuki M."/>
            <person name="Aoki J."/>
            <person name="Arakawa T."/>
            <person name="Iida J."/>
            <person name="Imamura K."/>
            <person name="Itoh M."/>
            <person name="Kato T."/>
            <person name="Kawaji H."/>
            <person name="Kawagashira N."/>
            <person name="Kawashima T."/>
            <person name="Kojima M."/>
            <person name="Kondo S."/>
            <person name="Konno H."/>
            <person name="Nakano K."/>
            <person name="Ninomiya N."/>
            <person name="Nishio T."/>
            <person name="Okada M."/>
            <person name="Plessy C."/>
            <person name="Shibata K."/>
            <person name="Shiraki T."/>
            <person name="Suzuki S."/>
            <person name="Tagami M."/>
            <person name="Waki K."/>
            <person name="Watahiki A."/>
            <person name="Okamura-Oho Y."/>
            <person name="Suzuki H."/>
            <person name="Kawai J."/>
            <person name="Hayashizaki Y."/>
        </authorList>
    </citation>
    <scope>NUCLEOTIDE SEQUENCE [LARGE SCALE MRNA]</scope>
    <source>
        <strain>NOD</strain>
    </source>
</reference>
<reference key="2">
    <citation type="journal article" date="2004" name="Genome Res.">
        <title>The status, quality, and expansion of the NIH full-length cDNA project: the Mammalian Gene Collection (MGC).</title>
        <authorList>
            <consortium name="The MGC Project Team"/>
        </authorList>
    </citation>
    <scope>NUCLEOTIDE SEQUENCE [LARGE SCALE MRNA]</scope>
</reference>
<reference key="3">
    <citation type="journal article" date="2010" name="Cell">
        <title>A tissue-specific atlas of mouse protein phosphorylation and expression.</title>
        <authorList>
            <person name="Huttlin E.L."/>
            <person name="Jedrychowski M.P."/>
            <person name="Elias J.E."/>
            <person name="Goswami T."/>
            <person name="Rad R."/>
            <person name="Beausoleil S.A."/>
            <person name="Villen J."/>
            <person name="Haas W."/>
            <person name="Sowa M.E."/>
            <person name="Gygi S.P."/>
        </authorList>
    </citation>
    <scope>IDENTIFICATION BY MASS SPECTROMETRY [LARGE SCALE ANALYSIS]</scope>
    <source>
        <tissue>Brain</tissue>
    </source>
</reference>
<reference key="4">
    <citation type="journal article" date="2014" name="Cancer Cell">
        <title>TIPE3 is the transfer protein of lipid second messengers that promote cancer.</title>
        <authorList>
            <person name="Fayngerts S.A."/>
            <person name="Wu J."/>
            <person name="Oxley C.L."/>
            <person name="Liu X."/>
            <person name="Vourekas A."/>
            <person name="Cathopoulis T."/>
            <person name="Wang Z."/>
            <person name="Cui J."/>
            <person name="Liu S."/>
            <person name="Sun H."/>
            <person name="Lemmon M.A."/>
            <person name="Zhang L."/>
            <person name="Shi Y."/>
            <person name="Chen Y.H."/>
        </authorList>
    </citation>
    <scope>TISSUE SPECIFICITY</scope>
    <scope>FUNCTION</scope>
    <scope>DISRUPTION PHENOTYPE</scope>
    <scope>MUTAGENESIS OF LYS-33; LYS-34; LYS-38; LYS-42; LEU-60; ARG-93 AND ARG-109</scope>
    <scope>SUBCELLULAR LOCATION</scope>
</reference>
<reference key="5">
    <citation type="journal article" date="2015" name="J. Histochem. Cytochem.">
        <title>Identical expression profiling of human and murine TIPE3 protein reveals links to its functions.</title>
        <authorList>
            <person name="Cui J."/>
            <person name="Hao C."/>
            <person name="Zhang W."/>
            <person name="Shao J."/>
            <person name="Zhang N."/>
            <person name="Zhang G."/>
            <person name="Liu S."/>
        </authorList>
    </citation>
    <scope>TISSUE SPECIFICITY</scope>
    <scope>SUBCELLULAR LOCATION</scope>
</reference>